<dbReference type="EC" id="3.6.1.66" evidence="1"/>
<dbReference type="EMBL" id="AE008917">
    <property type="protein sequence ID" value="AAL52953.1"/>
    <property type="status" value="ALT_INIT"/>
    <property type="molecule type" value="Genomic_DNA"/>
</dbReference>
<dbReference type="PIR" id="AF3473">
    <property type="entry name" value="AF3473"/>
</dbReference>
<dbReference type="SMR" id="P64305"/>
<dbReference type="KEGG" id="bme:BMEI1772"/>
<dbReference type="KEGG" id="bmel:DK63_1713"/>
<dbReference type="PATRIC" id="fig|224914.52.peg.1811"/>
<dbReference type="eggNOG" id="COG0127">
    <property type="taxonomic scope" value="Bacteria"/>
</dbReference>
<dbReference type="Proteomes" id="UP000000419">
    <property type="component" value="Chromosome I"/>
</dbReference>
<dbReference type="GO" id="GO:0005829">
    <property type="term" value="C:cytosol"/>
    <property type="evidence" value="ECO:0007669"/>
    <property type="project" value="TreeGrafter"/>
</dbReference>
<dbReference type="GO" id="GO:0035870">
    <property type="term" value="F:dITP diphosphatase activity"/>
    <property type="evidence" value="ECO:0007669"/>
    <property type="project" value="RHEA"/>
</dbReference>
<dbReference type="GO" id="GO:0036220">
    <property type="term" value="F:ITP diphosphatase activity"/>
    <property type="evidence" value="ECO:0007669"/>
    <property type="project" value="UniProtKB-EC"/>
</dbReference>
<dbReference type="GO" id="GO:0046872">
    <property type="term" value="F:metal ion binding"/>
    <property type="evidence" value="ECO:0007669"/>
    <property type="project" value="UniProtKB-KW"/>
</dbReference>
<dbReference type="GO" id="GO:0000166">
    <property type="term" value="F:nucleotide binding"/>
    <property type="evidence" value="ECO:0007669"/>
    <property type="project" value="UniProtKB-KW"/>
</dbReference>
<dbReference type="GO" id="GO:0017111">
    <property type="term" value="F:ribonucleoside triphosphate phosphatase activity"/>
    <property type="evidence" value="ECO:0007669"/>
    <property type="project" value="InterPro"/>
</dbReference>
<dbReference type="GO" id="GO:0036222">
    <property type="term" value="F:XTP diphosphatase activity"/>
    <property type="evidence" value="ECO:0007669"/>
    <property type="project" value="RHEA"/>
</dbReference>
<dbReference type="GO" id="GO:0009117">
    <property type="term" value="P:nucleotide metabolic process"/>
    <property type="evidence" value="ECO:0007669"/>
    <property type="project" value="UniProtKB-KW"/>
</dbReference>
<dbReference type="GO" id="GO:0009146">
    <property type="term" value="P:purine nucleoside triphosphate catabolic process"/>
    <property type="evidence" value="ECO:0007669"/>
    <property type="project" value="UniProtKB-UniRule"/>
</dbReference>
<dbReference type="CDD" id="cd00515">
    <property type="entry name" value="HAM1"/>
    <property type="match status" value="1"/>
</dbReference>
<dbReference type="FunFam" id="3.90.950.10:FF:000001">
    <property type="entry name" value="dITP/XTP pyrophosphatase"/>
    <property type="match status" value="1"/>
</dbReference>
<dbReference type="Gene3D" id="3.90.950.10">
    <property type="match status" value="1"/>
</dbReference>
<dbReference type="HAMAP" id="MF_01405">
    <property type="entry name" value="Non_canon_purine_NTPase"/>
    <property type="match status" value="1"/>
</dbReference>
<dbReference type="InterPro" id="IPR020922">
    <property type="entry name" value="dITP/XTP_pyrophosphatase"/>
</dbReference>
<dbReference type="InterPro" id="IPR029001">
    <property type="entry name" value="ITPase-like_fam"/>
</dbReference>
<dbReference type="InterPro" id="IPR002637">
    <property type="entry name" value="RdgB/HAM1"/>
</dbReference>
<dbReference type="NCBIfam" id="TIGR00042">
    <property type="entry name" value="RdgB/HAM1 family non-canonical purine NTP pyrophosphatase"/>
    <property type="match status" value="1"/>
</dbReference>
<dbReference type="PANTHER" id="PTHR11067:SF9">
    <property type="entry name" value="INOSINE TRIPHOSPHATE PYROPHOSPHATASE"/>
    <property type="match status" value="1"/>
</dbReference>
<dbReference type="PANTHER" id="PTHR11067">
    <property type="entry name" value="INOSINE TRIPHOSPHATE PYROPHOSPHATASE/HAM1 PROTEIN"/>
    <property type="match status" value="1"/>
</dbReference>
<dbReference type="Pfam" id="PF01725">
    <property type="entry name" value="Ham1p_like"/>
    <property type="match status" value="1"/>
</dbReference>
<dbReference type="SUPFAM" id="SSF52972">
    <property type="entry name" value="ITPase-like"/>
    <property type="match status" value="1"/>
</dbReference>
<keyword id="KW-0378">Hydrolase</keyword>
<keyword id="KW-0460">Magnesium</keyword>
<keyword id="KW-0479">Metal-binding</keyword>
<keyword id="KW-0546">Nucleotide metabolism</keyword>
<keyword id="KW-0547">Nucleotide-binding</keyword>
<feature type="chain" id="PRO_0000178141" description="dITP/XTP pyrophosphatase">
    <location>
        <begin position="1"/>
        <end position="220"/>
    </location>
</feature>
<feature type="active site" description="Proton acceptor" evidence="1">
    <location>
        <position position="74"/>
    </location>
</feature>
<feature type="binding site" evidence="1">
    <location>
        <begin position="13"/>
        <end position="18"/>
    </location>
    <ligand>
        <name>substrate</name>
    </ligand>
</feature>
<feature type="binding site" evidence="1">
    <location>
        <position position="45"/>
    </location>
    <ligand>
        <name>Mg(2+)</name>
        <dbReference type="ChEBI" id="CHEBI:18420"/>
    </ligand>
</feature>
<feature type="binding site" evidence="1">
    <location>
        <position position="74"/>
    </location>
    <ligand>
        <name>Mg(2+)</name>
        <dbReference type="ChEBI" id="CHEBI:18420"/>
    </ligand>
</feature>
<feature type="binding site" evidence="1">
    <location>
        <position position="75"/>
    </location>
    <ligand>
        <name>substrate</name>
    </ligand>
</feature>
<feature type="binding site" evidence="1">
    <location>
        <begin position="163"/>
        <end position="166"/>
    </location>
    <ligand>
        <name>substrate</name>
    </ligand>
</feature>
<feature type="binding site" evidence="1">
    <location>
        <position position="186"/>
    </location>
    <ligand>
        <name>substrate</name>
    </ligand>
</feature>
<feature type="binding site" evidence="1">
    <location>
        <begin position="199"/>
        <end position="200"/>
    </location>
    <ligand>
        <name>substrate</name>
    </ligand>
</feature>
<gene>
    <name type="ordered locus">BMEI1772</name>
</gene>
<proteinExistence type="inferred from homology"/>
<reference key="1">
    <citation type="journal article" date="2002" name="Proc. Natl. Acad. Sci. U.S.A.">
        <title>The genome sequence of the facultative intracellular pathogen Brucella melitensis.</title>
        <authorList>
            <person name="DelVecchio V.G."/>
            <person name="Kapatral V."/>
            <person name="Redkar R.J."/>
            <person name="Patra G."/>
            <person name="Mujer C."/>
            <person name="Los T."/>
            <person name="Ivanova N."/>
            <person name="Anderson I."/>
            <person name="Bhattacharyya A."/>
            <person name="Lykidis A."/>
            <person name="Reznik G."/>
            <person name="Jablonski L."/>
            <person name="Larsen N."/>
            <person name="D'Souza M."/>
            <person name="Bernal A."/>
            <person name="Mazur M."/>
            <person name="Goltsman E."/>
            <person name="Selkov E."/>
            <person name="Elzer P.H."/>
            <person name="Hagius S."/>
            <person name="O'Callaghan D."/>
            <person name="Letesson J.-J."/>
            <person name="Haselkorn R."/>
            <person name="Kyrpides N.C."/>
            <person name="Overbeek R."/>
        </authorList>
    </citation>
    <scope>NUCLEOTIDE SEQUENCE [LARGE SCALE GENOMIC DNA]</scope>
    <source>
        <strain>ATCC 23456 / CCUG 17765 / NCTC 10094 / 16M</strain>
    </source>
</reference>
<sequence length="220" mass="23795">MRMLEKGKLIVASHNAGKLREFDGLIGPFGFEVSSVAALGLPEPDETGTTFEENAYIKALAAAKATGFPALSDDSGLMVDALDGEPGVYTANWAETEDGKRDFDMAMQKVENLLQEKGATTPDKRKARFVSVICLAWPDGEAEYFRGEVEGTLVWPPRGNIGFGYDPVFLPDGYGKTFGEMTAEEKHGWKPGDASALSHRARAFKLFAEKALNVVSAPAE</sequence>
<accession>P64305</accession>
<accession>Q8YEV5</accession>
<name>IXTPA_BRUME</name>
<comment type="function">
    <text evidence="1">Pyrophosphatase that catalyzes the hydrolysis of nucleoside triphosphates to their monophosphate derivatives, with a high preference for the non-canonical purine nucleotides XTP (xanthosine triphosphate), dITP (deoxyinosine triphosphate) and ITP. Seems to function as a house-cleaning enzyme that removes non-canonical purine nucleotides from the nucleotide pool, thus preventing their incorporation into DNA/RNA and avoiding chromosomal lesions.</text>
</comment>
<comment type="catalytic activity">
    <reaction evidence="1">
        <text>XTP + H2O = XMP + diphosphate + H(+)</text>
        <dbReference type="Rhea" id="RHEA:28610"/>
        <dbReference type="ChEBI" id="CHEBI:15377"/>
        <dbReference type="ChEBI" id="CHEBI:15378"/>
        <dbReference type="ChEBI" id="CHEBI:33019"/>
        <dbReference type="ChEBI" id="CHEBI:57464"/>
        <dbReference type="ChEBI" id="CHEBI:61314"/>
        <dbReference type="EC" id="3.6.1.66"/>
    </reaction>
</comment>
<comment type="catalytic activity">
    <reaction evidence="1">
        <text>dITP + H2O = dIMP + diphosphate + H(+)</text>
        <dbReference type="Rhea" id="RHEA:28342"/>
        <dbReference type="ChEBI" id="CHEBI:15377"/>
        <dbReference type="ChEBI" id="CHEBI:15378"/>
        <dbReference type="ChEBI" id="CHEBI:33019"/>
        <dbReference type="ChEBI" id="CHEBI:61194"/>
        <dbReference type="ChEBI" id="CHEBI:61382"/>
        <dbReference type="EC" id="3.6.1.66"/>
    </reaction>
</comment>
<comment type="catalytic activity">
    <reaction evidence="1">
        <text>ITP + H2O = IMP + diphosphate + H(+)</text>
        <dbReference type="Rhea" id="RHEA:29399"/>
        <dbReference type="ChEBI" id="CHEBI:15377"/>
        <dbReference type="ChEBI" id="CHEBI:15378"/>
        <dbReference type="ChEBI" id="CHEBI:33019"/>
        <dbReference type="ChEBI" id="CHEBI:58053"/>
        <dbReference type="ChEBI" id="CHEBI:61402"/>
        <dbReference type="EC" id="3.6.1.66"/>
    </reaction>
</comment>
<comment type="cofactor">
    <cofactor evidence="1">
        <name>Mg(2+)</name>
        <dbReference type="ChEBI" id="CHEBI:18420"/>
    </cofactor>
    <text evidence="1">Binds 1 Mg(2+) ion per subunit.</text>
</comment>
<comment type="subunit">
    <text evidence="1">Homodimer.</text>
</comment>
<comment type="similarity">
    <text evidence="1">Belongs to the HAM1 NTPase family.</text>
</comment>
<comment type="sequence caution" evidence="2">
    <conflict type="erroneous initiation">
        <sequence resource="EMBL-CDS" id="AAL52953"/>
    </conflict>
</comment>
<organism>
    <name type="scientific">Brucella melitensis biotype 1 (strain ATCC 23456 / CCUG 17765 / NCTC 10094 / 16M)</name>
    <dbReference type="NCBI Taxonomy" id="224914"/>
    <lineage>
        <taxon>Bacteria</taxon>
        <taxon>Pseudomonadati</taxon>
        <taxon>Pseudomonadota</taxon>
        <taxon>Alphaproteobacteria</taxon>
        <taxon>Hyphomicrobiales</taxon>
        <taxon>Brucellaceae</taxon>
        <taxon>Brucella/Ochrobactrum group</taxon>
        <taxon>Brucella</taxon>
    </lineage>
</organism>
<evidence type="ECO:0000255" key="1">
    <source>
        <dbReference type="HAMAP-Rule" id="MF_01405"/>
    </source>
</evidence>
<evidence type="ECO:0000305" key="2"/>
<protein>
    <recommendedName>
        <fullName evidence="1">dITP/XTP pyrophosphatase</fullName>
        <ecNumber evidence="1">3.6.1.66</ecNumber>
    </recommendedName>
    <alternativeName>
        <fullName evidence="1">Non-canonical purine NTP pyrophosphatase</fullName>
    </alternativeName>
    <alternativeName>
        <fullName evidence="1">Non-standard purine NTP pyrophosphatase</fullName>
    </alternativeName>
    <alternativeName>
        <fullName evidence="1">Nucleoside-triphosphate diphosphatase</fullName>
    </alternativeName>
    <alternativeName>
        <fullName evidence="1">Nucleoside-triphosphate pyrophosphatase</fullName>
        <shortName evidence="1">NTPase</shortName>
    </alternativeName>
</protein>